<keyword id="KW-0002">3D-structure</keyword>
<keyword id="KW-0456">Lyase</keyword>
<keyword id="KW-0663">Pyridoxal phosphate</keyword>
<keyword id="KW-1185">Reference proteome</keyword>
<evidence type="ECO:0000255" key="1">
    <source>
        <dbReference type="HAMAP-Rule" id="MF_01030"/>
    </source>
</evidence>
<evidence type="ECO:0007829" key="2">
    <source>
        <dbReference type="PDB" id="3R0X"/>
    </source>
</evidence>
<evidence type="ECO:0007829" key="3">
    <source>
        <dbReference type="PDB" id="3R0Z"/>
    </source>
</evidence>
<feature type="chain" id="PRO_0000185620" description="D-serine dehydratase">
    <location>
        <begin position="1"/>
        <end position="440"/>
    </location>
</feature>
<feature type="modified residue" description="N6-(pyridoxal phosphate)lysine" evidence="1">
    <location>
        <position position="116"/>
    </location>
</feature>
<feature type="helix" evidence="2">
    <location>
        <begin position="2"/>
        <end position="8"/>
    </location>
</feature>
<feature type="helix" evidence="2">
    <location>
        <begin position="13"/>
        <end position="18"/>
    </location>
</feature>
<feature type="strand" evidence="2">
    <location>
        <begin position="24"/>
        <end position="26"/>
    </location>
</feature>
<feature type="helix" evidence="2">
    <location>
        <begin position="33"/>
        <end position="36"/>
    </location>
</feature>
<feature type="helix" evidence="2">
    <location>
        <begin position="37"/>
        <end position="39"/>
    </location>
</feature>
<feature type="helix" evidence="2">
    <location>
        <begin position="44"/>
        <end position="56"/>
    </location>
</feature>
<feature type="helix" evidence="2">
    <location>
        <begin position="58"/>
        <end position="64"/>
    </location>
</feature>
<feature type="helix" evidence="2">
    <location>
        <begin position="66"/>
        <end position="71"/>
    </location>
</feature>
<feature type="strand" evidence="2">
    <location>
        <begin position="79"/>
        <end position="81"/>
    </location>
</feature>
<feature type="helix" evidence="2">
    <location>
        <begin position="83"/>
        <end position="93"/>
    </location>
</feature>
<feature type="strand" evidence="2">
    <location>
        <begin position="99"/>
        <end position="105"/>
    </location>
</feature>
<feature type="helix" evidence="2">
    <location>
        <begin position="106"/>
        <end position="108"/>
    </location>
</feature>
<feature type="strand" evidence="2">
    <location>
        <begin position="110"/>
        <end position="112"/>
    </location>
</feature>
<feature type="helix" evidence="2">
    <location>
        <begin position="115"/>
        <end position="134"/>
    </location>
</feature>
<feature type="helix" evidence="2">
    <location>
        <begin position="144"/>
        <end position="148"/>
    </location>
</feature>
<feature type="helix" evidence="2">
    <location>
        <begin position="150"/>
        <end position="156"/>
    </location>
</feature>
<feature type="strand" evidence="2">
    <location>
        <begin position="160"/>
        <end position="164"/>
    </location>
</feature>
<feature type="helix" evidence="2">
    <location>
        <begin position="168"/>
        <end position="180"/>
    </location>
</feature>
<feature type="strand" evidence="2">
    <location>
        <begin position="183"/>
        <end position="189"/>
    </location>
</feature>
<feature type="helix" evidence="2">
    <location>
        <begin position="194"/>
        <end position="201"/>
    </location>
</feature>
<feature type="turn" evidence="2">
    <location>
        <begin position="202"/>
        <end position="204"/>
    </location>
</feature>
<feature type="strand" evidence="2">
    <location>
        <begin position="206"/>
        <end position="212"/>
    </location>
</feature>
<feature type="helix" evidence="2">
    <location>
        <begin position="214"/>
        <end position="226"/>
    </location>
</feature>
<feature type="strand" evidence="2">
    <location>
        <begin position="231"/>
        <end position="234"/>
    </location>
</feature>
<feature type="turn" evidence="2">
    <location>
        <begin position="236"/>
        <end position="238"/>
    </location>
</feature>
<feature type="helix" evidence="2">
    <location>
        <begin position="240"/>
        <end position="247"/>
    </location>
</feature>
<feature type="helix" evidence="2">
    <location>
        <begin position="249"/>
        <end position="260"/>
    </location>
</feature>
<feature type="strand" evidence="3">
    <location>
        <begin position="265"/>
        <end position="268"/>
    </location>
</feature>
<feature type="strand" evidence="2">
    <location>
        <begin position="270"/>
        <end position="275"/>
    </location>
</feature>
<feature type="strand" evidence="2">
    <location>
        <begin position="277"/>
        <end position="279"/>
    </location>
</feature>
<feature type="helix" evidence="2">
    <location>
        <begin position="280"/>
        <end position="293"/>
    </location>
</feature>
<feature type="helix" evidence="2">
    <location>
        <begin position="294"/>
        <end position="296"/>
    </location>
</feature>
<feature type="strand" evidence="2">
    <location>
        <begin position="297"/>
        <end position="304"/>
    </location>
</feature>
<feature type="helix" evidence="2">
    <location>
        <begin position="309"/>
        <end position="316"/>
    </location>
</feature>
<feature type="helix" evidence="2">
    <location>
        <begin position="319"/>
        <end position="321"/>
    </location>
</feature>
<feature type="helix" evidence="2">
    <location>
        <begin position="325"/>
        <end position="327"/>
    </location>
</feature>
<feature type="helix" evidence="2">
    <location>
        <begin position="336"/>
        <end position="338"/>
    </location>
</feature>
<feature type="helix" evidence="2">
    <location>
        <begin position="346"/>
        <end position="351"/>
    </location>
</feature>
<feature type="helix" evidence="2">
    <location>
        <begin position="352"/>
        <end position="354"/>
    </location>
</feature>
<feature type="strand" evidence="2">
    <location>
        <begin position="356"/>
        <end position="361"/>
    </location>
</feature>
<feature type="helix" evidence="2">
    <location>
        <begin position="363"/>
        <end position="377"/>
    </location>
</feature>
<feature type="helix" evidence="2">
    <location>
        <begin position="383"/>
        <end position="390"/>
    </location>
</feature>
<feature type="helix" evidence="2">
    <location>
        <begin position="391"/>
        <end position="397"/>
    </location>
</feature>
<feature type="helix" evidence="2">
    <location>
        <begin position="399"/>
        <end position="404"/>
    </location>
</feature>
<feature type="helix" evidence="2">
    <location>
        <begin position="409"/>
        <end position="412"/>
    </location>
</feature>
<feature type="strand" evidence="2">
    <location>
        <begin position="416"/>
        <end position="421"/>
    </location>
</feature>
<feature type="helix" evidence="2">
    <location>
        <begin position="429"/>
        <end position="437"/>
    </location>
</feature>
<sequence length="440" mass="47369">MENIQKLIARYPLVEDLVALKETTWFNPGATSLAQGLPYVGLTEQDVNAAHDRLARFAPYLAKAFPQTAAAGGMIESDVVAIPAMQKRLEKEYGQTINGEMLLKKDSHLAISGSIKARGGIYEVLTHAEKLALEAGLLTTDDDYSVLLSPEFKQFFSQYSIAVGSTGNLGLSIGIMSACIGFKVTVHMSADARAWKKAKLRSHGVTVVEYEDDYGVAVEQGRKAAQSDPNCFFIDDENSRTLFLGYAVAGQRLKAQFAQQGRVVDASHPLFVYLPCGVGGGPGGVAFGLKLAFGDNVHCFFAEPTHSPCMLLGVYTGLHDAISVQDIGIDNLTAADGLAVGRASGFVGRAMERLLDGLYTLDDQTMYDMLGWLAQEEGIRLEPSALAGMAGPQRICASVAYQQRHGFSQTQLGNATHLVWATGGGMVPEDEMEQYLAKGR</sequence>
<accession>Q8ZL08</accession>
<dbReference type="EC" id="4.3.1.18" evidence="1"/>
<dbReference type="EMBL" id="AE006468">
    <property type="protein sequence ID" value="AAL22662.1"/>
    <property type="molecule type" value="Genomic_DNA"/>
</dbReference>
<dbReference type="RefSeq" id="NP_462703.1">
    <property type="nucleotide sequence ID" value="NC_003197.2"/>
</dbReference>
<dbReference type="RefSeq" id="WP_000427997.1">
    <property type="nucleotide sequence ID" value="NC_003197.2"/>
</dbReference>
<dbReference type="PDB" id="3R0X">
    <property type="method" value="X-ray"/>
    <property type="resolution" value="1.93 A"/>
    <property type="chains" value="A=1-440"/>
</dbReference>
<dbReference type="PDB" id="3R0Z">
    <property type="method" value="X-ray"/>
    <property type="resolution" value="2.40 A"/>
    <property type="chains" value="A=1-440"/>
</dbReference>
<dbReference type="PDB" id="6AA9">
    <property type="method" value="X-ray"/>
    <property type="resolution" value="2.70 A"/>
    <property type="chains" value="A=1-440"/>
</dbReference>
<dbReference type="PDBsum" id="3R0X"/>
<dbReference type="PDBsum" id="3R0Z"/>
<dbReference type="PDBsum" id="6AA9"/>
<dbReference type="SMR" id="Q8ZL08"/>
<dbReference type="STRING" id="99287.STM3802"/>
<dbReference type="PaxDb" id="99287-STM3802"/>
<dbReference type="GeneID" id="1255329"/>
<dbReference type="KEGG" id="stm:STM3802"/>
<dbReference type="PATRIC" id="fig|99287.12.peg.4023"/>
<dbReference type="HOGENOM" id="CLU_035707_0_0_6"/>
<dbReference type="OMA" id="ESDPNCF"/>
<dbReference type="PhylomeDB" id="Q8ZL08"/>
<dbReference type="BioCyc" id="SENT99287:STM3802-MONOMER"/>
<dbReference type="BRENDA" id="4.3.1.18">
    <property type="organism ID" value="5542"/>
</dbReference>
<dbReference type="EvolutionaryTrace" id="Q8ZL08"/>
<dbReference type="Proteomes" id="UP000001014">
    <property type="component" value="Chromosome"/>
</dbReference>
<dbReference type="GO" id="GO:0008721">
    <property type="term" value="F:D-serine ammonia-lyase activity"/>
    <property type="evidence" value="ECO:0000318"/>
    <property type="project" value="GO_Central"/>
</dbReference>
<dbReference type="GO" id="GO:0016836">
    <property type="term" value="F:hydro-lyase activity"/>
    <property type="evidence" value="ECO:0007669"/>
    <property type="project" value="UniProtKB-UniRule"/>
</dbReference>
<dbReference type="GO" id="GO:0030170">
    <property type="term" value="F:pyridoxal phosphate binding"/>
    <property type="evidence" value="ECO:0007669"/>
    <property type="project" value="InterPro"/>
</dbReference>
<dbReference type="GO" id="GO:0036088">
    <property type="term" value="P:D-serine catabolic process"/>
    <property type="evidence" value="ECO:0000318"/>
    <property type="project" value="GO_Central"/>
</dbReference>
<dbReference type="CDD" id="cd06447">
    <property type="entry name" value="D-Ser-dehyd"/>
    <property type="match status" value="1"/>
</dbReference>
<dbReference type="FunFam" id="3.40.50.1100:FF:000018">
    <property type="entry name" value="D-serine dehydratase"/>
    <property type="match status" value="1"/>
</dbReference>
<dbReference type="Gene3D" id="3.40.50.1100">
    <property type="match status" value="2"/>
</dbReference>
<dbReference type="HAMAP" id="MF_01030">
    <property type="entry name" value="D_Ser_dehydrat"/>
    <property type="match status" value="1"/>
</dbReference>
<dbReference type="InterPro" id="IPR011780">
    <property type="entry name" value="D_Ser_am_lyase"/>
</dbReference>
<dbReference type="InterPro" id="IPR050147">
    <property type="entry name" value="Ser/Thr_Dehydratase"/>
</dbReference>
<dbReference type="InterPro" id="IPR000634">
    <property type="entry name" value="Ser/Thr_deHydtase_PyrdxlP-BS"/>
</dbReference>
<dbReference type="InterPro" id="IPR001926">
    <property type="entry name" value="TrpB-like_PALP"/>
</dbReference>
<dbReference type="InterPro" id="IPR036052">
    <property type="entry name" value="TrpB-like_PALP_sf"/>
</dbReference>
<dbReference type="NCBIfam" id="TIGR02035">
    <property type="entry name" value="D_Ser_am_lyase"/>
    <property type="match status" value="1"/>
</dbReference>
<dbReference type="NCBIfam" id="NF002823">
    <property type="entry name" value="PRK02991.1"/>
    <property type="match status" value="1"/>
</dbReference>
<dbReference type="PANTHER" id="PTHR48078:SF9">
    <property type="entry name" value="D-SERINE DEHYDRATASE"/>
    <property type="match status" value="1"/>
</dbReference>
<dbReference type="PANTHER" id="PTHR48078">
    <property type="entry name" value="THREONINE DEHYDRATASE, MITOCHONDRIAL-RELATED"/>
    <property type="match status" value="1"/>
</dbReference>
<dbReference type="Pfam" id="PF00291">
    <property type="entry name" value="PALP"/>
    <property type="match status" value="1"/>
</dbReference>
<dbReference type="SUPFAM" id="SSF53686">
    <property type="entry name" value="Tryptophan synthase beta subunit-like PLP-dependent enzymes"/>
    <property type="match status" value="1"/>
</dbReference>
<dbReference type="PROSITE" id="PS00165">
    <property type="entry name" value="DEHYDRATASE_SER_THR"/>
    <property type="match status" value="1"/>
</dbReference>
<protein>
    <recommendedName>
        <fullName evidence="1">D-serine dehydratase</fullName>
        <ecNumber evidence="1">4.3.1.18</ecNumber>
    </recommendedName>
    <alternativeName>
        <fullName evidence="1">D-serine deaminase</fullName>
        <shortName evidence="1">DSD</shortName>
    </alternativeName>
</protein>
<name>SDHD_SALTY</name>
<organism>
    <name type="scientific">Salmonella typhimurium (strain LT2 / SGSC1412 / ATCC 700720)</name>
    <dbReference type="NCBI Taxonomy" id="99287"/>
    <lineage>
        <taxon>Bacteria</taxon>
        <taxon>Pseudomonadati</taxon>
        <taxon>Pseudomonadota</taxon>
        <taxon>Gammaproteobacteria</taxon>
        <taxon>Enterobacterales</taxon>
        <taxon>Enterobacteriaceae</taxon>
        <taxon>Salmonella</taxon>
    </lineage>
</organism>
<reference key="1">
    <citation type="journal article" date="2001" name="Nature">
        <title>Complete genome sequence of Salmonella enterica serovar Typhimurium LT2.</title>
        <authorList>
            <person name="McClelland M."/>
            <person name="Sanderson K.E."/>
            <person name="Spieth J."/>
            <person name="Clifton S.W."/>
            <person name="Latreille P."/>
            <person name="Courtney L."/>
            <person name="Porwollik S."/>
            <person name="Ali J."/>
            <person name="Dante M."/>
            <person name="Du F."/>
            <person name="Hou S."/>
            <person name="Layman D."/>
            <person name="Leonard S."/>
            <person name="Nguyen C."/>
            <person name="Scott K."/>
            <person name="Holmes A."/>
            <person name="Grewal N."/>
            <person name="Mulvaney E."/>
            <person name="Ryan E."/>
            <person name="Sun H."/>
            <person name="Florea L."/>
            <person name="Miller W."/>
            <person name="Stoneking T."/>
            <person name="Nhan M."/>
            <person name="Waterston R."/>
            <person name="Wilson R.K."/>
        </authorList>
    </citation>
    <scope>NUCLEOTIDE SEQUENCE [LARGE SCALE GENOMIC DNA]</scope>
    <source>
        <strain>LT2 / SGSC1412 / ATCC 700720</strain>
    </source>
</reference>
<gene>
    <name evidence="1" type="primary">dsdA</name>
    <name type="ordered locus">STM3802</name>
</gene>
<proteinExistence type="evidence at protein level"/>
<comment type="catalytic activity">
    <reaction evidence="1">
        <text>D-serine = pyruvate + NH4(+)</text>
        <dbReference type="Rhea" id="RHEA:13977"/>
        <dbReference type="ChEBI" id="CHEBI:15361"/>
        <dbReference type="ChEBI" id="CHEBI:28938"/>
        <dbReference type="ChEBI" id="CHEBI:35247"/>
        <dbReference type="EC" id="4.3.1.18"/>
    </reaction>
</comment>
<comment type="cofactor">
    <cofactor evidence="1">
        <name>pyridoxal 5'-phosphate</name>
        <dbReference type="ChEBI" id="CHEBI:597326"/>
    </cofactor>
</comment>
<comment type="subunit">
    <text evidence="1">Monomer.</text>
</comment>
<comment type="similarity">
    <text evidence="1">Belongs to the serine/threonine dehydratase family. DsdA subfamily.</text>
</comment>